<dbReference type="EC" id="2.4.2.18" evidence="1"/>
<dbReference type="EMBL" id="CP001298">
    <property type="protein sequence ID" value="ACK85898.1"/>
    <property type="molecule type" value="Genomic_DNA"/>
</dbReference>
<dbReference type="RefSeq" id="WP_015952792.1">
    <property type="nucleotide sequence ID" value="NC_011757.1"/>
</dbReference>
<dbReference type="SMR" id="B7KUV9"/>
<dbReference type="KEGG" id="mch:Mchl_5134"/>
<dbReference type="HOGENOM" id="CLU_034315_2_1_5"/>
<dbReference type="UniPathway" id="UPA00035">
    <property type="reaction ID" value="UER00041"/>
</dbReference>
<dbReference type="Proteomes" id="UP000002385">
    <property type="component" value="Chromosome"/>
</dbReference>
<dbReference type="GO" id="GO:0005829">
    <property type="term" value="C:cytosol"/>
    <property type="evidence" value="ECO:0007669"/>
    <property type="project" value="TreeGrafter"/>
</dbReference>
<dbReference type="GO" id="GO:0004048">
    <property type="term" value="F:anthranilate phosphoribosyltransferase activity"/>
    <property type="evidence" value="ECO:0007669"/>
    <property type="project" value="UniProtKB-UniRule"/>
</dbReference>
<dbReference type="GO" id="GO:0000287">
    <property type="term" value="F:magnesium ion binding"/>
    <property type="evidence" value="ECO:0007669"/>
    <property type="project" value="UniProtKB-UniRule"/>
</dbReference>
<dbReference type="GO" id="GO:0000162">
    <property type="term" value="P:L-tryptophan biosynthetic process"/>
    <property type="evidence" value="ECO:0007669"/>
    <property type="project" value="UniProtKB-UniRule"/>
</dbReference>
<dbReference type="FunFam" id="3.40.1030.10:FF:000002">
    <property type="entry name" value="Anthranilate phosphoribosyltransferase"/>
    <property type="match status" value="1"/>
</dbReference>
<dbReference type="Gene3D" id="3.40.1030.10">
    <property type="entry name" value="Nucleoside phosphorylase/phosphoribosyltransferase catalytic domain"/>
    <property type="match status" value="1"/>
</dbReference>
<dbReference type="Gene3D" id="1.20.970.10">
    <property type="entry name" value="Transferase, Pyrimidine Nucleoside Phosphorylase, Chain C"/>
    <property type="match status" value="1"/>
</dbReference>
<dbReference type="HAMAP" id="MF_00211">
    <property type="entry name" value="TrpD"/>
    <property type="match status" value="1"/>
</dbReference>
<dbReference type="InterPro" id="IPR005940">
    <property type="entry name" value="Anthranilate_Pribosyl_Tfrase"/>
</dbReference>
<dbReference type="InterPro" id="IPR000312">
    <property type="entry name" value="Glycosyl_Trfase_fam3"/>
</dbReference>
<dbReference type="InterPro" id="IPR017459">
    <property type="entry name" value="Glycosyl_Trfase_fam3_N_dom"/>
</dbReference>
<dbReference type="InterPro" id="IPR036320">
    <property type="entry name" value="Glycosyl_Trfase_fam3_N_dom_sf"/>
</dbReference>
<dbReference type="InterPro" id="IPR035902">
    <property type="entry name" value="Nuc_phospho_transferase"/>
</dbReference>
<dbReference type="NCBIfam" id="TIGR01245">
    <property type="entry name" value="trpD"/>
    <property type="match status" value="1"/>
</dbReference>
<dbReference type="PANTHER" id="PTHR43285">
    <property type="entry name" value="ANTHRANILATE PHOSPHORIBOSYLTRANSFERASE"/>
    <property type="match status" value="1"/>
</dbReference>
<dbReference type="PANTHER" id="PTHR43285:SF2">
    <property type="entry name" value="ANTHRANILATE PHOSPHORIBOSYLTRANSFERASE"/>
    <property type="match status" value="1"/>
</dbReference>
<dbReference type="Pfam" id="PF02885">
    <property type="entry name" value="Glycos_trans_3N"/>
    <property type="match status" value="1"/>
</dbReference>
<dbReference type="Pfam" id="PF00591">
    <property type="entry name" value="Glycos_transf_3"/>
    <property type="match status" value="1"/>
</dbReference>
<dbReference type="SUPFAM" id="SSF52418">
    <property type="entry name" value="Nucleoside phosphorylase/phosphoribosyltransferase catalytic domain"/>
    <property type="match status" value="1"/>
</dbReference>
<dbReference type="SUPFAM" id="SSF47648">
    <property type="entry name" value="Nucleoside phosphorylase/phosphoribosyltransferase N-terminal domain"/>
    <property type="match status" value="1"/>
</dbReference>
<reference key="1">
    <citation type="submission" date="2008-12" db="EMBL/GenBank/DDBJ databases">
        <title>Complete sequence of chromosome of Methylobacterium chloromethanicum CM4.</title>
        <authorList>
            <consortium name="US DOE Joint Genome Institute"/>
            <person name="Lucas S."/>
            <person name="Copeland A."/>
            <person name="Lapidus A."/>
            <person name="Glavina del Rio T."/>
            <person name="Dalin E."/>
            <person name="Tice H."/>
            <person name="Bruce D."/>
            <person name="Goodwin L."/>
            <person name="Pitluck S."/>
            <person name="Chertkov O."/>
            <person name="Brettin T."/>
            <person name="Detter J.C."/>
            <person name="Han C."/>
            <person name="Larimer F."/>
            <person name="Land M."/>
            <person name="Hauser L."/>
            <person name="Kyrpides N."/>
            <person name="Mikhailova N."/>
            <person name="Marx C."/>
            <person name="Richardson P."/>
        </authorList>
    </citation>
    <scope>NUCLEOTIDE SEQUENCE [LARGE SCALE GENOMIC DNA]</scope>
    <source>
        <strain>CM4 / NCIMB 13688</strain>
    </source>
</reference>
<sequence>MDAFKTHLAIVASGAPLSREQARAAFDDLLSGEVTPIQAGAFLTALSVRGESEDEIVGAVSAMRARMLPVAAPEGAIDIVGTGGDHSGSYNVSTLAAILTAACGVPVAKHGNRAATSRSGAADVLAALGVKIGLPPEALARCLSEAGLCFMFAQTHHGAMRHVAPVRTELPFRTIFNMLGPLSNPAGVTAQVFGVSRPAWAEPLTRVLATLGSRRVWTVHGSDGLDEITTTGPTAVVALEDGAFRHFTLDPREVSLPLATLDDLRGGDPEHNAAALGAVLEGARNAYRDIAVLNAGAGLVVAGAAGSLAEGVARAQEAIDSGAARGTLARLVAVSNA</sequence>
<accession>B7KUV9</accession>
<proteinExistence type="inferred from homology"/>
<feature type="chain" id="PRO_1000198829" description="Anthranilate phosphoribosyltransferase">
    <location>
        <begin position="1"/>
        <end position="337"/>
    </location>
</feature>
<feature type="binding site" evidence="1">
    <location>
        <position position="81"/>
    </location>
    <ligand>
        <name>5-phospho-alpha-D-ribose 1-diphosphate</name>
        <dbReference type="ChEBI" id="CHEBI:58017"/>
    </ligand>
</feature>
<feature type="binding site" evidence="1">
    <location>
        <position position="81"/>
    </location>
    <ligand>
        <name>anthranilate</name>
        <dbReference type="ChEBI" id="CHEBI:16567"/>
        <label>1</label>
    </ligand>
</feature>
<feature type="binding site" evidence="1">
    <location>
        <begin position="84"/>
        <end position="85"/>
    </location>
    <ligand>
        <name>5-phospho-alpha-D-ribose 1-diphosphate</name>
        <dbReference type="ChEBI" id="CHEBI:58017"/>
    </ligand>
</feature>
<feature type="binding site" evidence="1">
    <location>
        <position position="89"/>
    </location>
    <ligand>
        <name>5-phospho-alpha-D-ribose 1-diphosphate</name>
        <dbReference type="ChEBI" id="CHEBI:58017"/>
    </ligand>
</feature>
<feature type="binding site" evidence="1">
    <location>
        <begin position="91"/>
        <end position="94"/>
    </location>
    <ligand>
        <name>5-phospho-alpha-D-ribose 1-diphosphate</name>
        <dbReference type="ChEBI" id="CHEBI:58017"/>
    </ligand>
</feature>
<feature type="binding site" evidence="1">
    <location>
        <position position="93"/>
    </location>
    <ligand>
        <name>Mg(2+)</name>
        <dbReference type="ChEBI" id="CHEBI:18420"/>
        <label>1</label>
    </ligand>
</feature>
<feature type="binding site" evidence="1">
    <location>
        <begin position="109"/>
        <end position="117"/>
    </location>
    <ligand>
        <name>5-phospho-alpha-D-ribose 1-diphosphate</name>
        <dbReference type="ChEBI" id="CHEBI:58017"/>
    </ligand>
</feature>
<feature type="binding site" evidence="1">
    <location>
        <position position="112"/>
    </location>
    <ligand>
        <name>anthranilate</name>
        <dbReference type="ChEBI" id="CHEBI:16567"/>
        <label>1</label>
    </ligand>
</feature>
<feature type="binding site" evidence="1">
    <location>
        <position position="121"/>
    </location>
    <ligand>
        <name>5-phospho-alpha-D-ribose 1-diphosphate</name>
        <dbReference type="ChEBI" id="CHEBI:58017"/>
    </ligand>
</feature>
<feature type="binding site" evidence="1">
    <location>
        <position position="167"/>
    </location>
    <ligand>
        <name>anthranilate</name>
        <dbReference type="ChEBI" id="CHEBI:16567"/>
        <label>2</label>
    </ligand>
</feature>
<feature type="binding site" evidence="1">
    <location>
        <position position="226"/>
    </location>
    <ligand>
        <name>Mg(2+)</name>
        <dbReference type="ChEBI" id="CHEBI:18420"/>
        <label>2</label>
    </ligand>
</feature>
<feature type="binding site" evidence="1">
    <location>
        <position position="227"/>
    </location>
    <ligand>
        <name>Mg(2+)</name>
        <dbReference type="ChEBI" id="CHEBI:18420"/>
        <label>1</label>
    </ligand>
</feature>
<feature type="binding site" evidence="1">
    <location>
        <position position="227"/>
    </location>
    <ligand>
        <name>Mg(2+)</name>
        <dbReference type="ChEBI" id="CHEBI:18420"/>
        <label>2</label>
    </ligand>
</feature>
<keyword id="KW-0028">Amino-acid biosynthesis</keyword>
<keyword id="KW-0057">Aromatic amino acid biosynthesis</keyword>
<keyword id="KW-0328">Glycosyltransferase</keyword>
<keyword id="KW-0460">Magnesium</keyword>
<keyword id="KW-0479">Metal-binding</keyword>
<keyword id="KW-0808">Transferase</keyword>
<keyword id="KW-0822">Tryptophan biosynthesis</keyword>
<comment type="function">
    <text evidence="1">Catalyzes the transfer of the phosphoribosyl group of 5-phosphorylribose-1-pyrophosphate (PRPP) to anthranilate to yield N-(5'-phosphoribosyl)-anthranilate (PRA).</text>
</comment>
<comment type="catalytic activity">
    <reaction evidence="1">
        <text>N-(5-phospho-beta-D-ribosyl)anthranilate + diphosphate = 5-phospho-alpha-D-ribose 1-diphosphate + anthranilate</text>
        <dbReference type="Rhea" id="RHEA:11768"/>
        <dbReference type="ChEBI" id="CHEBI:16567"/>
        <dbReference type="ChEBI" id="CHEBI:18277"/>
        <dbReference type="ChEBI" id="CHEBI:33019"/>
        <dbReference type="ChEBI" id="CHEBI:58017"/>
        <dbReference type="EC" id="2.4.2.18"/>
    </reaction>
</comment>
<comment type="cofactor">
    <cofactor evidence="1">
        <name>Mg(2+)</name>
        <dbReference type="ChEBI" id="CHEBI:18420"/>
    </cofactor>
    <text evidence="1">Binds 2 magnesium ions per monomer.</text>
</comment>
<comment type="pathway">
    <text evidence="1">Amino-acid biosynthesis; L-tryptophan biosynthesis; L-tryptophan from chorismate: step 2/5.</text>
</comment>
<comment type="subunit">
    <text evidence="1">Homodimer.</text>
</comment>
<comment type="similarity">
    <text evidence="1">Belongs to the anthranilate phosphoribosyltransferase family.</text>
</comment>
<gene>
    <name evidence="1" type="primary">trpD</name>
    <name type="ordered locus">Mchl_5134</name>
</gene>
<evidence type="ECO:0000255" key="1">
    <source>
        <dbReference type="HAMAP-Rule" id="MF_00211"/>
    </source>
</evidence>
<protein>
    <recommendedName>
        <fullName evidence="1">Anthranilate phosphoribosyltransferase</fullName>
        <ecNumber evidence="1">2.4.2.18</ecNumber>
    </recommendedName>
</protein>
<name>TRPD_METC4</name>
<organism>
    <name type="scientific">Methylorubrum extorquens (strain CM4 / NCIMB 13688)</name>
    <name type="common">Methylobacterium extorquens</name>
    <dbReference type="NCBI Taxonomy" id="440085"/>
    <lineage>
        <taxon>Bacteria</taxon>
        <taxon>Pseudomonadati</taxon>
        <taxon>Pseudomonadota</taxon>
        <taxon>Alphaproteobacteria</taxon>
        <taxon>Hyphomicrobiales</taxon>
        <taxon>Methylobacteriaceae</taxon>
        <taxon>Methylorubrum</taxon>
    </lineage>
</organism>